<gene>
    <name evidence="12 15" type="primary">PEX6</name>
    <name evidence="13" type="synonym">PAS8</name>
    <name type="ordered locus">YNL329C</name>
    <name type="ORF">N0310</name>
</gene>
<dbReference type="EC" id="3.6.4.-" evidence="9 10 11"/>
<dbReference type="EMBL" id="L20789">
    <property type="protein sequence ID" value="AAA16574.1"/>
    <property type="molecule type" value="Unassigned_DNA"/>
</dbReference>
<dbReference type="EMBL" id="Z46259">
    <property type="protein sequence ID" value="CAA86369.1"/>
    <property type="molecule type" value="Genomic_DNA"/>
</dbReference>
<dbReference type="EMBL" id="Z71605">
    <property type="protein sequence ID" value="CAA96261.1"/>
    <property type="molecule type" value="Genomic_DNA"/>
</dbReference>
<dbReference type="EMBL" id="X83226">
    <property type="protein sequence ID" value="CAA58229.1"/>
    <property type="molecule type" value="Genomic_DNA"/>
</dbReference>
<dbReference type="EMBL" id="BK006947">
    <property type="protein sequence ID" value="DAA10234.1"/>
    <property type="molecule type" value="Genomic_DNA"/>
</dbReference>
<dbReference type="PIR" id="S43211">
    <property type="entry name" value="S43211"/>
</dbReference>
<dbReference type="RefSeq" id="NP_014070.1">
    <property type="nucleotide sequence ID" value="NM_001183167.1"/>
</dbReference>
<dbReference type="PDB" id="8C0V">
    <property type="method" value="EM"/>
    <property type="resolution" value="4.10 A"/>
    <property type="chains" value="B/D/F=1-1030"/>
</dbReference>
<dbReference type="PDB" id="8C0W">
    <property type="method" value="EM"/>
    <property type="resolution" value="4.70 A"/>
    <property type="chains" value="A/C/E=1-1030"/>
</dbReference>
<dbReference type="PDB" id="8U0V">
    <property type="method" value="EM"/>
    <property type="resolution" value="3.89 A"/>
    <property type="chains" value="B/D/F=1-1030"/>
</dbReference>
<dbReference type="PDB" id="8U0X">
    <property type="method" value="X-ray"/>
    <property type="resolution" value="1.86 A"/>
    <property type="chains" value="A=1-184"/>
</dbReference>
<dbReference type="PDBsum" id="8C0V"/>
<dbReference type="PDBsum" id="8C0W"/>
<dbReference type="PDBsum" id="8U0V"/>
<dbReference type="PDBsum" id="8U0X"/>
<dbReference type="EMDB" id="EMD-16372"/>
<dbReference type="EMDB" id="EMD-16373"/>
<dbReference type="EMDB" id="EMD-2582"/>
<dbReference type="EMDB" id="EMD-2583"/>
<dbReference type="EMDB" id="EMD-2584"/>
<dbReference type="EMDB" id="EMD-2585"/>
<dbReference type="EMDB" id="EMD-2586"/>
<dbReference type="EMDB" id="EMD-2587"/>
<dbReference type="EMDB" id="EMD-2588"/>
<dbReference type="EMDB" id="EMD-41788"/>
<dbReference type="EMDB" id="EMD-6253"/>
<dbReference type="EMDB" id="EMD-6254"/>
<dbReference type="EMDB" id="EMD-6255"/>
<dbReference type="EMDB" id="EMD-6359"/>
<dbReference type="EMDB" id="EMD-6360"/>
<dbReference type="SMR" id="P33760"/>
<dbReference type="BioGRID" id="35512">
    <property type="interactions" value="89"/>
</dbReference>
<dbReference type="ComplexPortal" id="CPX-1901">
    <property type="entry name" value="Peroxisomal receptor export module complex"/>
</dbReference>
<dbReference type="DIP" id="DIP-2621N"/>
<dbReference type="FunCoup" id="P33760">
    <property type="interactions" value="348"/>
</dbReference>
<dbReference type="IntAct" id="P33760">
    <property type="interactions" value="15"/>
</dbReference>
<dbReference type="MINT" id="P33760"/>
<dbReference type="STRING" id="4932.YNL329C"/>
<dbReference type="TCDB" id="3.A.20.1.5">
    <property type="family name" value="the peroxisomal protein importer (ppi) family"/>
</dbReference>
<dbReference type="GlyGen" id="P33760">
    <property type="glycosylation" value="1 site"/>
</dbReference>
<dbReference type="iPTMnet" id="P33760"/>
<dbReference type="PaxDb" id="4932-YNL329C"/>
<dbReference type="PeptideAtlas" id="P33760"/>
<dbReference type="EnsemblFungi" id="YNL329C_mRNA">
    <property type="protein sequence ID" value="YNL329C"/>
    <property type="gene ID" value="YNL329C"/>
</dbReference>
<dbReference type="GeneID" id="855387"/>
<dbReference type="KEGG" id="sce:YNL329C"/>
<dbReference type="AGR" id="SGD:S000005273"/>
<dbReference type="SGD" id="S000005273">
    <property type="gene designation" value="PEX6"/>
</dbReference>
<dbReference type="VEuPathDB" id="FungiDB:YNL329C"/>
<dbReference type="eggNOG" id="KOG0736">
    <property type="taxonomic scope" value="Eukaryota"/>
</dbReference>
<dbReference type="GeneTree" id="ENSGT00550000074953"/>
<dbReference type="HOGENOM" id="CLU_000688_0_4_1"/>
<dbReference type="InParanoid" id="P33760"/>
<dbReference type="OMA" id="DSMLNAM"/>
<dbReference type="OrthoDB" id="5553750at2759"/>
<dbReference type="BioCyc" id="YEAST:G3O-33313-MONOMER"/>
<dbReference type="BRENDA" id="3.6.4.7">
    <property type="organism ID" value="984"/>
</dbReference>
<dbReference type="BioGRID-ORCS" id="855387">
    <property type="hits" value="0 hits in 10 CRISPR screens"/>
</dbReference>
<dbReference type="PRO" id="PR:P33760"/>
<dbReference type="Proteomes" id="UP000002311">
    <property type="component" value="Chromosome XIV"/>
</dbReference>
<dbReference type="RNAct" id="P33760">
    <property type="molecule type" value="protein"/>
</dbReference>
<dbReference type="GO" id="GO:1904949">
    <property type="term" value="C:ATPase complex"/>
    <property type="evidence" value="ECO:0000314"/>
    <property type="project" value="UniProt"/>
</dbReference>
<dbReference type="GO" id="GO:0005829">
    <property type="term" value="C:cytosol"/>
    <property type="evidence" value="ECO:0000314"/>
    <property type="project" value="SGD"/>
</dbReference>
<dbReference type="GO" id="GO:0005778">
    <property type="term" value="C:peroxisomal membrane"/>
    <property type="evidence" value="ECO:0000318"/>
    <property type="project" value="GO_Central"/>
</dbReference>
<dbReference type="GO" id="GO:0005777">
    <property type="term" value="C:peroxisome"/>
    <property type="evidence" value="ECO:0000314"/>
    <property type="project" value="SGD"/>
</dbReference>
<dbReference type="GO" id="GO:1990351">
    <property type="term" value="C:transporter complex"/>
    <property type="evidence" value="ECO:0000314"/>
    <property type="project" value="UniProt"/>
</dbReference>
<dbReference type="GO" id="GO:0005524">
    <property type="term" value="F:ATP binding"/>
    <property type="evidence" value="ECO:0007669"/>
    <property type="project" value="UniProtKB-KW"/>
</dbReference>
<dbReference type="GO" id="GO:0016887">
    <property type="term" value="F:ATP hydrolysis activity"/>
    <property type="evidence" value="ECO:0000315"/>
    <property type="project" value="SGD"/>
</dbReference>
<dbReference type="GO" id="GO:0140318">
    <property type="term" value="F:protein transporter activity"/>
    <property type="evidence" value="ECO:0000314"/>
    <property type="project" value="UniProtKB"/>
</dbReference>
<dbReference type="GO" id="GO:0016558">
    <property type="term" value="P:protein import into peroxisome matrix"/>
    <property type="evidence" value="ECO:0000314"/>
    <property type="project" value="SGD"/>
</dbReference>
<dbReference type="GO" id="GO:0016562">
    <property type="term" value="P:protein import into peroxisome matrix, receptor recycling"/>
    <property type="evidence" value="ECO:0000314"/>
    <property type="project" value="UniProtKB"/>
</dbReference>
<dbReference type="GO" id="GO:0043335">
    <property type="term" value="P:protein unfolding"/>
    <property type="evidence" value="ECO:0000314"/>
    <property type="project" value="UniProtKB"/>
</dbReference>
<dbReference type="CDD" id="cd19527">
    <property type="entry name" value="RecA-like_PEX6_r2"/>
    <property type="match status" value="1"/>
</dbReference>
<dbReference type="FunFam" id="3.40.50.300:FF:000109">
    <property type="entry name" value="Peroxisomal biogenesis factor 6"/>
    <property type="match status" value="1"/>
</dbReference>
<dbReference type="FunFam" id="1.10.8.60:FF:000039">
    <property type="entry name" value="peroxisome biogenesis factor 6"/>
    <property type="match status" value="1"/>
</dbReference>
<dbReference type="Gene3D" id="1.10.8.60">
    <property type="match status" value="2"/>
</dbReference>
<dbReference type="Gene3D" id="3.40.50.300">
    <property type="entry name" value="P-loop containing nucleotide triphosphate hydrolases"/>
    <property type="match status" value="2"/>
</dbReference>
<dbReference type="InterPro" id="IPR003593">
    <property type="entry name" value="AAA+_ATPase"/>
</dbReference>
<dbReference type="InterPro" id="IPR050168">
    <property type="entry name" value="AAA_ATPase_domain"/>
</dbReference>
<dbReference type="InterPro" id="IPR041569">
    <property type="entry name" value="AAA_lid_3"/>
</dbReference>
<dbReference type="InterPro" id="IPR003959">
    <property type="entry name" value="ATPase_AAA_core"/>
</dbReference>
<dbReference type="InterPro" id="IPR003960">
    <property type="entry name" value="ATPase_AAA_CS"/>
</dbReference>
<dbReference type="InterPro" id="IPR027417">
    <property type="entry name" value="P-loop_NTPase"/>
</dbReference>
<dbReference type="InterPro" id="IPR056995">
    <property type="entry name" value="PEX6_4th_dom"/>
</dbReference>
<dbReference type="InterPro" id="IPR047533">
    <property type="entry name" value="RecA-like_PEX6_r2"/>
</dbReference>
<dbReference type="PANTHER" id="PTHR23077">
    <property type="entry name" value="AAA-FAMILY ATPASE"/>
    <property type="match status" value="1"/>
</dbReference>
<dbReference type="PANTHER" id="PTHR23077:SF9">
    <property type="entry name" value="PEROXISOMAL ATPASE PEX6"/>
    <property type="match status" value="1"/>
</dbReference>
<dbReference type="Pfam" id="PF00004">
    <property type="entry name" value="AAA"/>
    <property type="match status" value="2"/>
</dbReference>
<dbReference type="Pfam" id="PF17862">
    <property type="entry name" value="AAA_lid_3"/>
    <property type="match status" value="1"/>
</dbReference>
<dbReference type="Pfam" id="PF23111">
    <property type="entry name" value="N1_PEX6"/>
    <property type="match status" value="1"/>
</dbReference>
<dbReference type="Pfam" id="PF23315">
    <property type="entry name" value="PEX6_4th"/>
    <property type="match status" value="1"/>
</dbReference>
<dbReference type="SMART" id="SM00382">
    <property type="entry name" value="AAA"/>
    <property type="match status" value="1"/>
</dbReference>
<dbReference type="SUPFAM" id="SSF52540">
    <property type="entry name" value="P-loop containing nucleoside triphosphate hydrolases"/>
    <property type="match status" value="2"/>
</dbReference>
<dbReference type="PROSITE" id="PS00674">
    <property type="entry name" value="AAA"/>
    <property type="match status" value="1"/>
</dbReference>
<proteinExistence type="evidence at protein level"/>
<reference key="1">
    <citation type="journal article" date="1993" name="Biochim. Biophys. Acta">
        <title>Sequence of the PAS8 gene, the product of which is essential for biogenesis of peroxisomes in Saccharomyces cerevisiae.</title>
        <authorList>
            <person name="Voorn-Brouwer T."/>
            <person name="van der Leij I."/>
            <person name="Hemrika W."/>
            <person name="Distel B."/>
            <person name="Tabak H.F."/>
        </authorList>
    </citation>
    <scope>NUCLEOTIDE SEQUENCE [GENOMIC DNA]</scope>
</reference>
<reference key="2">
    <citation type="journal article" date="1995" name="Yeast">
        <title>Sequencing analysis of a 15.4 kb fragment of yeast chromosome XIV identifies the RPD3, PAS8 and KRE1 loci, five new open reading frames.</title>
        <authorList>
            <person name="Maftahi M."/>
            <person name="Nicaud J.-M."/>
            <person name="Levesque H."/>
            <person name="Gaillardin C."/>
        </authorList>
    </citation>
    <scope>NUCLEOTIDE SEQUENCE [GENOMIC DNA]</scope>
    <source>
        <strain>S288c / FY1676</strain>
    </source>
</reference>
<reference key="3">
    <citation type="journal article" date="1997" name="Nature">
        <title>The nucleotide sequence of Saccharomyces cerevisiae chromosome XIV and its evolutionary implications.</title>
        <authorList>
            <person name="Philippsen P."/>
            <person name="Kleine K."/>
            <person name="Poehlmann R."/>
            <person name="Duesterhoeft A."/>
            <person name="Hamberg K."/>
            <person name="Hegemann J.H."/>
            <person name="Obermaier B."/>
            <person name="Urrestarazu L.A."/>
            <person name="Aert R."/>
            <person name="Albermann K."/>
            <person name="Altmann R."/>
            <person name="Andre B."/>
            <person name="Baladron V."/>
            <person name="Ballesta J.P.G."/>
            <person name="Becam A.-M."/>
            <person name="Beinhauer J.D."/>
            <person name="Boskovic J."/>
            <person name="Buitrago M.J."/>
            <person name="Bussereau F."/>
            <person name="Coster F."/>
            <person name="Crouzet M."/>
            <person name="D'Angelo M."/>
            <person name="Dal Pero F."/>
            <person name="De Antoni A."/>
            <person name="del Rey F."/>
            <person name="Doignon F."/>
            <person name="Domdey H."/>
            <person name="Dubois E."/>
            <person name="Fiedler T.A."/>
            <person name="Fleig U."/>
            <person name="Floeth M."/>
            <person name="Fritz C."/>
            <person name="Gaillardin C."/>
            <person name="Garcia-Cantalejo J.M."/>
            <person name="Glansdorff N."/>
            <person name="Goffeau A."/>
            <person name="Gueldener U."/>
            <person name="Herbert C.J."/>
            <person name="Heumann K."/>
            <person name="Heuss-Neitzel D."/>
            <person name="Hilbert H."/>
            <person name="Hinni K."/>
            <person name="Iraqui Houssaini I."/>
            <person name="Jacquet M."/>
            <person name="Jimenez A."/>
            <person name="Jonniaux J.-L."/>
            <person name="Karpfinger-Hartl L."/>
            <person name="Lanfranchi G."/>
            <person name="Lepingle A."/>
            <person name="Levesque H."/>
            <person name="Lyck R."/>
            <person name="Maftahi M."/>
            <person name="Mallet L."/>
            <person name="Maurer C.T.C."/>
            <person name="Messenguy F."/>
            <person name="Mewes H.-W."/>
            <person name="Moestl D."/>
            <person name="Nasr F."/>
            <person name="Nicaud J.-M."/>
            <person name="Niedenthal R.K."/>
            <person name="Pandolfo D."/>
            <person name="Pierard A."/>
            <person name="Piravandi E."/>
            <person name="Planta R.J."/>
            <person name="Pohl T.M."/>
            <person name="Purnelle B."/>
            <person name="Rebischung C."/>
            <person name="Remacha M.A."/>
            <person name="Revuelta J.L."/>
            <person name="Rinke M."/>
            <person name="Saiz J.E."/>
            <person name="Sartorello F."/>
            <person name="Scherens B."/>
            <person name="Sen-Gupta M."/>
            <person name="Soler-Mira A."/>
            <person name="Urbanus J.H.M."/>
            <person name="Valle G."/>
            <person name="Van Dyck L."/>
            <person name="Verhasselt P."/>
            <person name="Vierendeels F."/>
            <person name="Vissers S."/>
            <person name="Voet M."/>
            <person name="Volckaert G."/>
            <person name="Wach A."/>
            <person name="Wambutt R."/>
            <person name="Wedler H."/>
            <person name="Zollner A."/>
            <person name="Hani J."/>
        </authorList>
    </citation>
    <scope>NUCLEOTIDE SEQUENCE [LARGE SCALE GENOMIC DNA]</scope>
    <source>
        <strain>ATCC 204508 / S288c</strain>
    </source>
</reference>
<reference key="4">
    <citation type="journal article" date="2014" name="G3 (Bethesda)">
        <title>The reference genome sequence of Saccharomyces cerevisiae: Then and now.</title>
        <authorList>
            <person name="Engel S.R."/>
            <person name="Dietrich F.S."/>
            <person name="Fisk D.G."/>
            <person name="Binkley G."/>
            <person name="Balakrishnan R."/>
            <person name="Costanzo M.C."/>
            <person name="Dwight S.S."/>
            <person name="Hitz B.C."/>
            <person name="Karra K."/>
            <person name="Nash R.S."/>
            <person name="Weng S."/>
            <person name="Wong E.D."/>
            <person name="Lloyd P."/>
            <person name="Skrzypek M.S."/>
            <person name="Miyasato S.R."/>
            <person name="Simison M."/>
            <person name="Cherry J.M."/>
        </authorList>
    </citation>
    <scope>GENOME REANNOTATION</scope>
    <source>
        <strain>ATCC 204508 / S288c</strain>
    </source>
</reference>
<reference key="5">
    <citation type="journal article" date="1995" name="Yeast">
        <title>An 8.2 kb DNA segment from chromosome XIV carries the RPD3 and PAS8 genes as well as the Saccharomyces cerevisiae homologue of the thiamine-repressed nmt1 gene and a chromosome III-duplicated gene for a putative aryl-alcohol dehydrogenase.</title>
        <authorList>
            <person name="van Dyck L."/>
            <person name="Pascual-Ahuir A."/>
            <person name="Purnelle B."/>
            <person name="Goffeau A."/>
        </authorList>
    </citation>
    <scope>NUCLEOTIDE SEQUENCE [GENOMIC DNA] OF 142-1030</scope>
    <source>
        <strain>ATCC 96604 / S288c / FY1679</strain>
    </source>
</reference>
<reference key="6">
    <citation type="journal article" date="2003" name="Mol. Biol. Cell">
        <title>Pex15p of Saccharomyces cerevisiae provides a molecular basis for recruitment of the AAA peroxin Pex6p to peroxisomal membranes.</title>
        <authorList>
            <person name="Birschmann I."/>
            <person name="Stroobants A.K."/>
            <person name="van den Berg M."/>
            <person name="Schaefer A."/>
            <person name="Rosenkranz K."/>
            <person name="Kunau W.-H."/>
            <person name="Tabak H.F."/>
        </authorList>
    </citation>
    <scope>INTERACTION WITH PEX15</scope>
    <scope>SUBCELLULAR LOCATION</scope>
    <scope>MUTAGENESIS OF LYS-489; LYS-778 AND ASP-831</scope>
</reference>
<reference key="7">
    <citation type="journal article" date="2003" name="Nature">
        <title>Global analysis of protein localization in budding yeast.</title>
        <authorList>
            <person name="Huh W.-K."/>
            <person name="Falvo J.V."/>
            <person name="Gerke L.C."/>
            <person name="Carroll A.S."/>
            <person name="Howson R.W."/>
            <person name="Weissman J.S."/>
            <person name="O'Shea E.K."/>
        </authorList>
    </citation>
    <scope>SUBCELLULAR LOCATION [LARGE SCALE ANALYSIS]</scope>
</reference>
<reference key="8">
    <citation type="journal article" date="2003" name="Nature">
        <title>Global analysis of protein expression in yeast.</title>
        <authorList>
            <person name="Ghaemmaghami S."/>
            <person name="Huh W.-K."/>
            <person name="Bower K."/>
            <person name="Howson R.W."/>
            <person name="Belle A."/>
            <person name="Dephoure N."/>
            <person name="O'Shea E.K."/>
            <person name="Weissman J.S."/>
        </authorList>
    </citation>
    <scope>LEVEL OF PROTEIN EXPRESSION [LARGE SCALE ANALYSIS]</scope>
</reference>
<reference key="9">
    <citation type="journal article" date="2005" name="FEBS J.">
        <title>Structural and functional analysis of the interaction of the AAA-peroxins Pex1p and Pex6p.</title>
        <authorList>
            <person name="Birschmann I."/>
            <person name="Rosenkranz K."/>
            <person name="Erdmann R."/>
            <person name="Kunau W.-H."/>
        </authorList>
    </citation>
    <scope>FUNCTION</scope>
    <scope>INTERACTION WITH PEX1</scope>
    <scope>MUTAGENESIS OF LYS-489; LYS-778 AND ASP-831</scope>
</reference>
<reference key="10">
    <citation type="journal article" date="2005" name="Nat. Cell Biol.">
        <title>Functional role of the AAA peroxins in dislocation of the cycling PTS1 receptor back to the cytosol.</title>
        <authorList>
            <person name="Platta H.W."/>
            <person name="Grunau S."/>
            <person name="Rosenkranz K."/>
            <person name="Girzalsky W."/>
            <person name="Erdmann R."/>
        </authorList>
    </citation>
    <scope>FUNCTION</scope>
    <scope>INTERACTION WITH PEX1</scope>
    <scope>MUTAGENESIS OF LYS-489; LYS-778 AND ASP-831</scope>
</reference>
<reference key="11">
    <citation type="journal article" date="2006" name="FEBS J.">
        <title>Functional association of the AAA complex and the peroxisomal importomer.</title>
        <authorList>
            <person name="Rosenkranz K."/>
            <person name="Birschmann I."/>
            <person name="Grunau S."/>
            <person name="Girzalsky W."/>
            <person name="Kunau W.-H."/>
            <person name="Erdmann R."/>
        </authorList>
    </citation>
    <scope>FUNCTION</scope>
</reference>
<reference key="12">
    <citation type="journal article" date="2011" name="J. Biol. Chem.">
        <title>Ubp15p, a ubiquitin hydrolase associated with the peroxisomal export machinery.</title>
        <authorList>
            <person name="Debelyy M.O."/>
            <person name="Platta H.W."/>
            <person name="Saffian D."/>
            <person name="Hensel A."/>
            <person name="Thoms S."/>
            <person name="Meyer H.E."/>
            <person name="Warscheid B."/>
            <person name="Girzalsky W."/>
            <person name="Erdmann R."/>
        </authorList>
    </citation>
    <scope>INTERACTION WITH UBP15</scope>
</reference>
<reference key="13">
    <citation type="journal article" date="2015" name="Proc. Natl. Acad. Sci. U.S.A.">
        <title>Unique double-ring structure of the peroxisomal Pex1/Pex6 ATPase complex revealed by cryo-electron microscopy.</title>
        <authorList>
            <person name="Blok N.B."/>
            <person name="Tan D."/>
            <person name="Wang R.Y."/>
            <person name="Penczek P.A."/>
            <person name="Baker D."/>
            <person name="DiMaio F."/>
            <person name="Rapoport T.A."/>
            <person name="Walz T."/>
        </authorList>
    </citation>
    <scope>FUNCTION</scope>
    <scope>CATALYTIC ACTIVITY</scope>
    <scope>INTERACTION WITH PEX1</scope>
    <scope>MUTAGENESIS OF LYS-778 AND GLU-832</scope>
</reference>
<reference key="14">
    <citation type="journal article" date="2015" name="Nat. Commun.">
        <title>Molecular snapshots of the Pex1/6 AAA+ complex in action.</title>
        <authorList>
            <person name="Ciniawsky S."/>
            <person name="Grimm I."/>
            <person name="Saffian D."/>
            <person name="Girzalsky W."/>
            <person name="Erdmann R."/>
            <person name="Wendler P."/>
        </authorList>
    </citation>
    <scope>FUNCTION</scope>
    <scope>CATALYTIC ACTIVITY</scope>
    <scope>INTERACTION WITH PEX1</scope>
    <scope>MUTAGENESIS OF TYR-528; TYR-805 AND GLU-832</scope>
</reference>
<reference key="15">
    <citation type="journal article" date="2018" name="Nat. Commun.">
        <title>The peroxisomal AAA-ATPase Pex1/Pex6 unfolds substrates by processive threading.</title>
        <authorList>
            <person name="Gardner B.M."/>
            <person name="Castanzo D.T."/>
            <person name="Chowdhury S."/>
            <person name="Stjepanovic G."/>
            <person name="Stefely M.S."/>
            <person name="Hurley J.H."/>
            <person name="Lander G.C."/>
            <person name="Martin A."/>
        </authorList>
    </citation>
    <scope>FUNCTION</scope>
    <scope>CATALYTIC ACTIVITY</scope>
    <scope>INTERACTION WITH PEX1</scope>
</reference>
<feature type="chain" id="PRO_0000084621" description="Peroxisomal ATPase PEX6">
    <location>
        <begin position="1"/>
        <end position="1030"/>
    </location>
</feature>
<feature type="region of interest" description="AAA-cassette D1">
    <location>
        <begin position="478"/>
        <end position="683"/>
    </location>
</feature>
<feature type="region of interest" description="AAA-cassette D2">
    <location>
        <begin position="767"/>
        <end position="956"/>
    </location>
</feature>
<feature type="binding site" evidence="1">
    <location>
        <begin position="772"/>
        <end position="779"/>
    </location>
    <ligand>
        <name>ATP</name>
        <dbReference type="ChEBI" id="CHEBI:30616"/>
    </ligand>
</feature>
<feature type="mutagenesis site" description="In PEX6pA1; decreased binding to PEX15." evidence="2 5 6">
    <original>K</original>
    <variation>A</variation>
    <location>
        <position position="489"/>
    </location>
</feature>
<feature type="mutagenesis site" description="Cells are able to grow on a medium with oleate as a sole carbon source." evidence="9">
    <original>Y</original>
    <variation>A</variation>
    <location>
        <position position="528"/>
    </location>
</feature>
<feature type="mutagenesis site" description="In PEX6pA2; increased amount of peroxisome-bound PEX6. Results in accumulation of PEX5 on peroxisomal membranes. In Amut mutant; abolished ATPase activity of the PEX1-PEX6 AAA ATPase complex." evidence="2 5 6 10">
    <original>K</original>
    <variation>A</variation>
    <location>
        <position position="778"/>
    </location>
</feature>
<feature type="mutagenesis site" description="Cells are unable to grow on a medium with oleate as a sole carbon source." evidence="9">
    <original>Y</original>
    <variation>A</variation>
    <location>
        <position position="805"/>
    </location>
</feature>
<feature type="mutagenesis site" description="In PEX6pB2; increased amount of peroxisome-bound PEX6. Results in accumulation of PEX5 on peroxisomal membranes." evidence="2 5 6">
    <original>D</original>
    <variation>Q</variation>
    <location>
        <position position="831"/>
    </location>
</feature>
<feature type="mutagenesis site" description="In Bmut mutant; abolished ATPase activity of the PEX1-PEX6 AAA ATPase complex." evidence="10">
    <original>E</original>
    <variation>A</variation>
    <location>
        <position position="832"/>
    </location>
</feature>
<feature type="mutagenesis site" description="Abolished ATP hydrolysis." evidence="9">
    <original>E</original>
    <variation>Q</variation>
    <location>
        <position position="832"/>
    </location>
</feature>
<feature type="strand" evidence="16">
    <location>
        <begin position="1"/>
        <end position="8"/>
    </location>
</feature>
<feature type="strand" evidence="16">
    <location>
        <begin position="16"/>
        <end position="18"/>
    </location>
</feature>
<feature type="helix" evidence="16">
    <location>
        <begin position="20"/>
        <end position="24"/>
    </location>
</feature>
<feature type="turn" evidence="16">
    <location>
        <begin position="25"/>
        <end position="28"/>
    </location>
</feature>
<feature type="strand" evidence="16">
    <location>
        <begin position="33"/>
        <end position="39"/>
    </location>
</feature>
<feature type="strand" evidence="16">
    <location>
        <begin position="43"/>
        <end position="45"/>
    </location>
</feature>
<feature type="strand" evidence="16">
    <location>
        <begin position="51"/>
        <end position="57"/>
    </location>
</feature>
<feature type="strand" evidence="16">
    <location>
        <begin position="63"/>
        <end position="69"/>
    </location>
</feature>
<feature type="helix" evidence="16">
    <location>
        <begin position="70"/>
        <end position="72"/>
    </location>
</feature>
<feature type="strand" evidence="16">
    <location>
        <begin position="73"/>
        <end position="75"/>
    </location>
</feature>
<feature type="strand" evidence="16">
    <location>
        <begin position="83"/>
        <end position="89"/>
    </location>
</feature>
<feature type="strand" evidence="16">
    <location>
        <begin position="99"/>
        <end position="105"/>
    </location>
</feature>
<feature type="helix" evidence="16">
    <location>
        <begin position="107"/>
        <end position="114"/>
    </location>
</feature>
<feature type="helix" evidence="16">
    <location>
        <begin position="119"/>
        <end position="130"/>
    </location>
</feature>
<feature type="turn" evidence="16">
    <location>
        <begin position="134"/>
        <end position="136"/>
    </location>
</feature>
<feature type="strand" evidence="16">
    <location>
        <begin position="138"/>
        <end position="140"/>
    </location>
</feature>
<feature type="strand" evidence="16">
    <location>
        <begin position="144"/>
        <end position="146"/>
    </location>
</feature>
<feature type="turn" evidence="16">
    <location>
        <begin position="147"/>
        <end position="149"/>
    </location>
</feature>
<feature type="strand" evidence="16">
    <location>
        <begin position="150"/>
        <end position="162"/>
    </location>
</feature>
<feature type="turn" evidence="16">
    <location>
        <begin position="165"/>
        <end position="167"/>
    </location>
</feature>
<feature type="strand" evidence="16">
    <location>
        <begin position="168"/>
        <end position="174"/>
    </location>
</feature>
<evidence type="ECO:0000255" key="1"/>
<evidence type="ECO:0000269" key="2">
    <source>
    </source>
</evidence>
<evidence type="ECO:0000269" key="3">
    <source>
    </source>
</evidence>
<evidence type="ECO:0000269" key="4">
    <source>
    </source>
</evidence>
<evidence type="ECO:0000269" key="5">
    <source>
    </source>
</evidence>
<evidence type="ECO:0000269" key="6">
    <source>
    </source>
</evidence>
<evidence type="ECO:0000269" key="7">
    <source>
    </source>
</evidence>
<evidence type="ECO:0000269" key="8">
    <source>
    </source>
</evidence>
<evidence type="ECO:0000269" key="9">
    <source>
    </source>
</evidence>
<evidence type="ECO:0000269" key="10">
    <source>
    </source>
</evidence>
<evidence type="ECO:0000269" key="11">
    <source>
    </source>
</evidence>
<evidence type="ECO:0000303" key="12">
    <source>
    </source>
</evidence>
<evidence type="ECO:0000303" key="13">
    <source>
    </source>
</evidence>
<evidence type="ECO:0000305" key="14"/>
<evidence type="ECO:0000312" key="15">
    <source>
        <dbReference type="SGD" id="S000005273"/>
    </source>
</evidence>
<evidence type="ECO:0007829" key="16">
    <source>
        <dbReference type="PDB" id="8U0X"/>
    </source>
</evidence>
<sequence>MKASLTFSLSGIYAPCSISRDIYLEYGDKKAECLYGTIRLPQYGPGCTPGKIVHCVLDDSLPFCSIVVPSKLFGFMPTQPTMDFCYFEPILDNVVPVLDSVTFLINEQLYSKLMDLPQEMQQIQFLHYKYNINSMETVVHSRDILTSGLCQILNCSPFPQGLVDFTETQLILVNDTEQKLSALKYANEDEEYALPKIGTNSALSIDLESLPCTISRDLLRPAPHINDDNSIYAFTDAETLLRLDVTSGSFITVSNMGCVRLVKLFVLLLPNGFKKRTIYAPPKIIASFPDCSVVTISKSNIGHTDIPIANQVFISRVGGWLQSQKCFQNIILTTLKKFFSESKRILCQNDLIPIAFDSSMADLNIAEENDESDDEDELGQYYKNDSLVWFFVTSAELDCFSKDNSHFIIDPNRTKLITTNITNRRPLPLSRSNLQRYYGFAETFYYDLHIFPYVRQLVNILETSFNCSQRGITLNASVLLHSTTNNVGKATMVRFASKYLGIHLLEIDCLSLTSNSRQLDSTSKIIGYIRAKCENVLPYASPAVIFLAHLDSILLDVNANQDPEAIKLQKSINFEMSKLLDDFTFKFPGTTFVGSVNNIDNVPSSFRSHMRFEILVPVPSEAQRLRIFQWYLSSHELNRDVQQKVPVSYMDNISFSSLSSYSAGLTPLDIKSIVETARMTATARFYQESKKCGWLPQSILITQEDLSKATSKARNEFSVSIGAPQIPNVTWDDIGGIDFVKGEILDTIDMPLKHPELFTSGMKKRSGILFYGPPGTGKTLMAKAIATNFSLNFFSVKGPELLNMYIGESEANVRRVFQKAREAKPCVIFFDEIDSVAPKRGNQGDSGGVMDRIVSQLLAELDGMSTDADGVFVIGATNRPDLLDEALLRPGRFDKLLYLGIPDTDTKQLNILEALTRKFVLDNDVKLIELAKLCPFNYTGADFYALCSDAMLNAMSRIARMVEKKVSQHNELTGENISTRRWFDKIATKEDTKVVVKMEDFLKAQEQLTPSVSRAELNHYEAVRANFEGA</sequence>
<keyword id="KW-0002">3D-structure</keyword>
<keyword id="KW-0067">ATP-binding</keyword>
<keyword id="KW-0963">Cytoplasm</keyword>
<keyword id="KW-0378">Hydrolase</keyword>
<keyword id="KW-0472">Membrane</keyword>
<keyword id="KW-0547">Nucleotide-binding</keyword>
<keyword id="KW-0576">Peroxisome</keyword>
<keyword id="KW-0962">Peroxisome biogenesis</keyword>
<keyword id="KW-1185">Reference proteome</keyword>
<protein>
    <recommendedName>
        <fullName evidence="14">Peroxisomal ATPase PEX6</fullName>
        <ecNumber evidence="9 10 11">3.6.4.-</ecNumber>
    </recommendedName>
    <alternativeName>
        <fullName evidence="14">Peroxin-6</fullName>
    </alternativeName>
    <alternativeName>
        <fullName evidence="13">Peroxisomal assembly protein 8</fullName>
    </alternativeName>
</protein>
<name>PEX6_YEAST</name>
<accession>P33760</accession>
<accession>D6W0L8</accession>
<organism>
    <name type="scientific">Saccharomyces cerevisiae (strain ATCC 204508 / S288c)</name>
    <name type="common">Baker's yeast</name>
    <dbReference type="NCBI Taxonomy" id="559292"/>
    <lineage>
        <taxon>Eukaryota</taxon>
        <taxon>Fungi</taxon>
        <taxon>Dikarya</taxon>
        <taxon>Ascomycota</taxon>
        <taxon>Saccharomycotina</taxon>
        <taxon>Saccharomycetes</taxon>
        <taxon>Saccharomycetales</taxon>
        <taxon>Saccharomycetaceae</taxon>
        <taxon>Saccharomyces</taxon>
    </lineage>
</organism>
<comment type="function">
    <text evidence="5 6 7 9 10 11">Component of the PEX1-PEX6 AAA ATPase complex, a protein dislocase complex that mediates the ATP-dependent extraction of the PEX5 receptor from peroxisomal membranes, an essential step for PEX5 recycling (PubMed:15634331, PubMed:16007078, PubMed:16911527, PubMed:26066397, PubMed:26170309, PubMed:29321502). Specifically recognizes PEX5 monoubiquitinated at 'Cys-6', and pulls it out of the peroxisome lumen through the PEX2-PEX10-PEX12 retrotranslocation channel (PubMed:26066397, PubMed:26170309, PubMed:29321502). Extraction by the PEX1-PEX6 AAA ATPase complex is accompanied by unfolding of the TPR repeats and release of bound cargo from PEX5 (PubMed:29321502).</text>
</comment>
<comment type="catalytic activity">
    <reaction evidence="9 10 11">
        <text>ATP + H2O = ADP + phosphate + H(+)</text>
        <dbReference type="Rhea" id="RHEA:13065"/>
        <dbReference type="ChEBI" id="CHEBI:15377"/>
        <dbReference type="ChEBI" id="CHEBI:15378"/>
        <dbReference type="ChEBI" id="CHEBI:30616"/>
        <dbReference type="ChEBI" id="CHEBI:43474"/>
        <dbReference type="ChEBI" id="CHEBI:456216"/>
    </reaction>
    <physiologicalReaction direction="left-to-right" evidence="9 10 11">
        <dbReference type="Rhea" id="RHEA:13066"/>
    </physiologicalReaction>
</comment>
<comment type="subunit">
    <text evidence="2 5 6 8 9 10 11">Interacts with PEX1; forming the PEX1-PEX6 AAA ATPase complex, which is composed of a heterohexamer formed by a trimer of PEX1-PEX6 dimers (PubMed:15634331, PubMed:16007078, PubMed:26066397, PubMed:26170309, PubMed:29321502). Interacts with PEX15; anchors PEX1-PEX6 heterooligomers to the peroxisomal membrane and mediates their association with the peroxisomal importomer (PubMed:12808025). Interacts with UBP15 (PubMed:21665945).</text>
</comment>
<comment type="interaction">
    <interactant intactId="EBI-13178">
        <id>P33760</id>
    </interactant>
    <interactant intactId="EBI-13155">
        <id>P24004</id>
        <label>PEX1</label>
    </interactant>
    <organismsDiffer>false</organismsDiffer>
    <experiments>17</experiments>
</comment>
<comment type="interaction">
    <interactant intactId="EBI-13178">
        <id>P33760</id>
    </interactant>
    <interactant intactId="EBI-13212">
        <id>P53112</id>
        <label>PEX14</label>
    </interactant>
    <organismsDiffer>false</organismsDiffer>
    <experiments>6</experiments>
</comment>
<comment type="interaction">
    <interactant intactId="EBI-13178">
        <id>P33760</id>
    </interactant>
    <interactant intactId="EBI-31849">
        <id>Q08215</id>
        <label>PEX15</label>
    </interactant>
    <organismsDiffer>false</organismsDiffer>
    <experiments>14</experiments>
</comment>
<comment type="subcellular location">
    <subcellularLocation>
        <location evidence="2">Cytoplasm</location>
        <location evidence="2">Cytosol</location>
    </subcellularLocation>
    <subcellularLocation>
        <location evidence="2 3">Peroxisome membrane</location>
        <topology evidence="2">Peripheral membrane protein</topology>
        <orientation evidence="2">Cytoplasmic side</orientation>
    </subcellularLocation>
    <text evidence="2">Associated with peroxisomal membranes; anchored by PEX15 to peroxisome membranes.</text>
</comment>
<comment type="domain">
    <text>AAA-cassette D1 is required for interaction with PEX1. ATP-binding in AAA-cassette D1 is required for attachment to PEX15. ATP-binding and hydrolysis in AAA-cassette D2 is required for release from PEX15 and proper function in PEX5 dislocation.</text>
</comment>
<comment type="miscellaneous">
    <text evidence="4">Present with 1630 molecules/cell in log phase SD medium.</text>
</comment>
<comment type="similarity">
    <text evidence="14">Belongs to the AAA ATPase family.</text>
</comment>